<dbReference type="EC" id="4.2.1.10" evidence="1 2 3 4 6"/>
<dbReference type="EMBL" id="AE006468">
    <property type="protein sequence ID" value="AAL20283.1"/>
    <property type="molecule type" value="Genomic_DNA"/>
</dbReference>
<dbReference type="RefSeq" id="NP_460324.1">
    <property type="nucleotide sequence ID" value="NC_003197.2"/>
</dbReference>
<dbReference type="RefSeq" id="WP_000860225.1">
    <property type="nucleotide sequence ID" value="NC_003197.2"/>
</dbReference>
<dbReference type="PDB" id="3L2I">
    <property type="method" value="X-ray"/>
    <property type="resolution" value="1.85 A"/>
    <property type="chains" value="A/B=1-252"/>
</dbReference>
<dbReference type="PDB" id="3LB0">
    <property type="method" value="X-ray"/>
    <property type="resolution" value="1.65 A"/>
    <property type="chains" value="A/B=1-252"/>
</dbReference>
<dbReference type="PDB" id="3M7W">
    <property type="method" value="X-ray"/>
    <property type="resolution" value="1.95 A"/>
    <property type="chains" value="A/B/C/D/E/F=1-252"/>
</dbReference>
<dbReference type="PDB" id="3NNT">
    <property type="method" value="X-ray"/>
    <property type="resolution" value="1.60 A"/>
    <property type="chains" value="A/B=1-252"/>
</dbReference>
<dbReference type="PDB" id="3O1N">
    <property type="method" value="X-ray"/>
    <property type="resolution" value="1.03 A"/>
    <property type="chains" value="A/B=1-252"/>
</dbReference>
<dbReference type="PDB" id="3OEX">
    <property type="method" value="X-ray"/>
    <property type="resolution" value="1.90 A"/>
    <property type="chains" value="A/B/C/D=1-252"/>
</dbReference>
<dbReference type="PDB" id="3S42">
    <property type="method" value="X-ray"/>
    <property type="resolution" value="1.45 A"/>
    <property type="chains" value="A/B=1-252"/>
</dbReference>
<dbReference type="PDB" id="4GFS">
    <property type="method" value="X-ray"/>
    <property type="resolution" value="1.80 A"/>
    <property type="chains" value="A/B=1-252"/>
</dbReference>
<dbReference type="PDB" id="4GUF">
    <property type="method" value="X-ray"/>
    <property type="resolution" value="1.50 A"/>
    <property type="chains" value="A/B=1-252"/>
</dbReference>
<dbReference type="PDB" id="4GUG">
    <property type="method" value="X-ray"/>
    <property type="resolution" value="1.62 A"/>
    <property type="chains" value="A/B=1-252"/>
</dbReference>
<dbReference type="PDB" id="4GUH">
    <property type="method" value="X-ray"/>
    <property type="resolution" value="1.95 A"/>
    <property type="chains" value="A/B=1-252"/>
</dbReference>
<dbReference type="PDB" id="4GUI">
    <property type="method" value="X-ray"/>
    <property type="resolution" value="1.78 A"/>
    <property type="chains" value="A/B=1-252"/>
</dbReference>
<dbReference type="PDB" id="4GUJ">
    <property type="method" value="X-ray"/>
    <property type="resolution" value="1.50 A"/>
    <property type="chains" value="A/B=1-252"/>
</dbReference>
<dbReference type="PDB" id="4IUO">
    <property type="method" value="X-ray"/>
    <property type="resolution" value="1.80 A"/>
    <property type="chains" value="A/B=1-252"/>
</dbReference>
<dbReference type="PDBsum" id="3L2I"/>
<dbReference type="PDBsum" id="3LB0"/>
<dbReference type="PDBsum" id="3M7W"/>
<dbReference type="PDBsum" id="3NNT"/>
<dbReference type="PDBsum" id="3O1N"/>
<dbReference type="PDBsum" id="3OEX"/>
<dbReference type="PDBsum" id="3S42"/>
<dbReference type="PDBsum" id="4GFS"/>
<dbReference type="PDBsum" id="4GUF"/>
<dbReference type="PDBsum" id="4GUG"/>
<dbReference type="PDBsum" id="4GUH"/>
<dbReference type="PDBsum" id="4GUI"/>
<dbReference type="PDBsum" id="4GUJ"/>
<dbReference type="PDBsum" id="4IUO"/>
<dbReference type="SMR" id="P58687"/>
<dbReference type="STRING" id="99287.STM1358"/>
<dbReference type="PaxDb" id="99287-STM1358"/>
<dbReference type="GeneID" id="1252876"/>
<dbReference type="KEGG" id="stm:STM1358"/>
<dbReference type="PATRIC" id="fig|99287.12.peg.1442"/>
<dbReference type="HOGENOM" id="CLU_064444_0_0_6"/>
<dbReference type="OMA" id="ATMAMGE"/>
<dbReference type="PhylomeDB" id="P58687"/>
<dbReference type="BioCyc" id="SENT99287:STM1358-MONOMER"/>
<dbReference type="BRENDA" id="4.2.1.10">
    <property type="organism ID" value="2169"/>
</dbReference>
<dbReference type="UniPathway" id="UPA00053">
    <property type="reaction ID" value="UER00086"/>
</dbReference>
<dbReference type="EvolutionaryTrace" id="P58687"/>
<dbReference type="Proteomes" id="UP000001014">
    <property type="component" value="Chromosome"/>
</dbReference>
<dbReference type="GO" id="GO:0003855">
    <property type="term" value="F:3-dehydroquinate dehydratase activity"/>
    <property type="evidence" value="ECO:0000314"/>
    <property type="project" value="UniProtKB"/>
</dbReference>
<dbReference type="GO" id="GO:0046279">
    <property type="term" value="P:3,4-dihydroxybenzoate biosynthetic process"/>
    <property type="evidence" value="ECO:0000314"/>
    <property type="project" value="UniProtKB"/>
</dbReference>
<dbReference type="GO" id="GO:0008652">
    <property type="term" value="P:amino acid biosynthetic process"/>
    <property type="evidence" value="ECO:0007669"/>
    <property type="project" value="UniProtKB-KW"/>
</dbReference>
<dbReference type="GO" id="GO:0009073">
    <property type="term" value="P:aromatic amino acid family biosynthetic process"/>
    <property type="evidence" value="ECO:0007669"/>
    <property type="project" value="UniProtKB-KW"/>
</dbReference>
<dbReference type="GO" id="GO:0009423">
    <property type="term" value="P:chorismate biosynthetic process"/>
    <property type="evidence" value="ECO:0007669"/>
    <property type="project" value="UniProtKB-UniRule"/>
</dbReference>
<dbReference type="CDD" id="cd00502">
    <property type="entry name" value="DHQase_I"/>
    <property type="match status" value="1"/>
</dbReference>
<dbReference type="FunFam" id="3.20.20.70:FF:000047">
    <property type="entry name" value="3-dehydroquinate dehydratase"/>
    <property type="match status" value="1"/>
</dbReference>
<dbReference type="Gene3D" id="3.20.20.70">
    <property type="entry name" value="Aldolase class I"/>
    <property type="match status" value="1"/>
</dbReference>
<dbReference type="HAMAP" id="MF_00214">
    <property type="entry name" value="AroD"/>
    <property type="match status" value="1"/>
</dbReference>
<dbReference type="InterPro" id="IPR018508">
    <property type="entry name" value="3-dehydroquinate_DH_AS"/>
</dbReference>
<dbReference type="InterPro" id="IPR013785">
    <property type="entry name" value="Aldolase_TIM"/>
</dbReference>
<dbReference type="InterPro" id="IPR001381">
    <property type="entry name" value="DHquinase_I"/>
</dbReference>
<dbReference type="InterPro" id="IPR050146">
    <property type="entry name" value="Type-I_3-dehydroquinase"/>
</dbReference>
<dbReference type="NCBIfam" id="TIGR01093">
    <property type="entry name" value="aroD"/>
    <property type="match status" value="1"/>
</dbReference>
<dbReference type="PANTHER" id="PTHR43699">
    <property type="entry name" value="3-DEHYDROQUINATE DEHYDRATASE"/>
    <property type="match status" value="1"/>
</dbReference>
<dbReference type="PANTHER" id="PTHR43699:SF1">
    <property type="entry name" value="3-DEHYDROQUINATE DEHYDRATASE"/>
    <property type="match status" value="1"/>
</dbReference>
<dbReference type="Pfam" id="PF01487">
    <property type="entry name" value="DHquinase_I"/>
    <property type="match status" value="1"/>
</dbReference>
<dbReference type="SUPFAM" id="SSF51569">
    <property type="entry name" value="Aldolase"/>
    <property type="match status" value="1"/>
</dbReference>
<dbReference type="PROSITE" id="PS01028">
    <property type="entry name" value="DEHYDROQUINASE_I"/>
    <property type="match status" value="1"/>
</dbReference>
<evidence type="ECO:0000255" key="1">
    <source>
        <dbReference type="HAMAP-Rule" id="MF_00214"/>
    </source>
</evidence>
<evidence type="ECO:0000269" key="2">
    <source>
    </source>
</evidence>
<evidence type="ECO:0000269" key="3">
    <source>
    </source>
</evidence>
<evidence type="ECO:0000269" key="4">
    <source>
    </source>
</evidence>
<evidence type="ECO:0000269" key="5">
    <source>
    </source>
</evidence>
<evidence type="ECO:0000269" key="6">
    <source>
    </source>
</evidence>
<evidence type="ECO:0000269" key="7">
    <source ref="4"/>
</evidence>
<evidence type="ECO:0000269" key="8">
    <source ref="7"/>
</evidence>
<evidence type="ECO:0000269" key="9">
    <source ref="8"/>
</evidence>
<evidence type="ECO:0000303" key="10">
    <source>
    </source>
</evidence>
<evidence type="ECO:0007829" key="11">
    <source>
        <dbReference type="PDB" id="3O1N"/>
    </source>
</evidence>
<gene>
    <name evidence="1" type="primary">aroD</name>
    <name type="ordered locus">STM1358</name>
</gene>
<organism>
    <name type="scientific">Salmonella typhimurium (strain LT2 / SGSC1412 / ATCC 700720)</name>
    <dbReference type="NCBI Taxonomy" id="99287"/>
    <lineage>
        <taxon>Bacteria</taxon>
        <taxon>Pseudomonadati</taxon>
        <taxon>Pseudomonadota</taxon>
        <taxon>Gammaproteobacteria</taxon>
        <taxon>Enterobacterales</taxon>
        <taxon>Enterobacteriaceae</taxon>
        <taxon>Salmonella</taxon>
    </lineage>
</organism>
<sequence>MKTVTVRDLVVGEGAPKIIVSLMGKTITDVKSEALAYREADFDILEWRVDHFANVTTAESVLEAAGAIREIITDKPLLFTFRSAKEGGEQALTTGQYIDLNRAAVDSGLVDMIDLELFTGDDEVKATVGYAHQHNVAVIMSNHDFHKTPAAEEIVQRLRKMQELGADIPKIAVMPQTKADVLTLLTATVEMQERYADRPIITMSMSKTGVISRLAGEVFGSAATFGAVKKASAPGQISVADLRTVLTILHQA</sequence>
<reference key="1">
    <citation type="journal article" date="2001" name="Nature">
        <title>Complete genome sequence of Salmonella enterica serovar Typhimurium LT2.</title>
        <authorList>
            <person name="McClelland M."/>
            <person name="Sanderson K.E."/>
            <person name="Spieth J."/>
            <person name="Clifton S.W."/>
            <person name="Latreille P."/>
            <person name="Courtney L."/>
            <person name="Porwollik S."/>
            <person name="Ali J."/>
            <person name="Dante M."/>
            <person name="Du F."/>
            <person name="Hou S."/>
            <person name="Layman D."/>
            <person name="Leonard S."/>
            <person name="Nguyen C."/>
            <person name="Scott K."/>
            <person name="Holmes A."/>
            <person name="Grewal N."/>
            <person name="Mulvaney E."/>
            <person name="Ryan E."/>
            <person name="Sun H."/>
            <person name="Florea L."/>
            <person name="Miller W."/>
            <person name="Stoneking T."/>
            <person name="Nhan M."/>
            <person name="Waterston R."/>
            <person name="Wilson R.K."/>
        </authorList>
    </citation>
    <scope>NUCLEOTIDE SEQUENCE [LARGE SCALE GENOMIC DNA]</scope>
    <source>
        <strain>LT2 / SGSC1412 / ATCC 700720</strain>
    </source>
</reference>
<reference key="2">
    <citation type="journal article" date="2012" name="Org. Biomol. Chem.">
        <title>New insights into the mechanism of the Schiff base hydrolysis catalyzed by type I dehydroquinate dehydratase from S. enterica: a theoretical study.</title>
        <authorList>
            <person name="Yao Y."/>
            <person name="Li Z.S."/>
        </authorList>
    </citation>
    <scope>ACTIVE SITE</scope>
</reference>
<reference key="3">
    <citation type="journal article" date="2014" name="Biochem. J.">
        <title>Insights into substrate binding and catalysis in bacterial type I dehydroquinase.</title>
        <authorList>
            <person name="Maneiro M."/>
            <person name="Peon A."/>
            <person name="Lence E."/>
            <person name="Otero J.M."/>
            <person name="Van Raaij M.J."/>
            <person name="Thompson P."/>
            <person name="Hawkins A.R."/>
            <person name="Gonzalez-Bello C."/>
        </authorList>
    </citation>
    <scope>FUNCTION</scope>
    <scope>CATALYTIC ACTIVITY</scope>
    <scope>BIOPHYSICOCHEMICAL PROPERTIES</scope>
    <scope>ACTIVITY REGULATION</scope>
</reference>
<reference key="4">
    <citation type="submission" date="2010-01" db="PDB data bank">
        <title>Crystal structure of the 3-dehydroquinate dehydratase (aroD) from Salmonella typhimurium LT2 with citrate bound to the active Site.</title>
        <authorList>
            <person name="Minasov G."/>
            <person name="Light S.H."/>
            <person name="Shuvalova L."/>
            <person name="Papazisi L."/>
            <person name="Anderson W.F."/>
        </authorList>
    </citation>
    <scope>X-RAY CRYSTALLOGRAPHY (1.65 ANGSTROMS) IN COMPLEX WITH SUBSTRATE ANALOGS</scope>
    <scope>SUBUNIT</scope>
    <source>
        <strain>LT2 / SGSC1412 / ATCC 700720</strain>
    </source>
</reference>
<reference key="5">
    <citation type="journal article" date="2011" name="Biochemistry">
        <title>A conserved surface loop in type I dehydroquinate dehydratases positions an active site arginine and functions in substrate binding.</title>
        <authorList>
            <person name="Light S.H."/>
            <person name="Minasov G."/>
            <person name="Shuvalova L."/>
            <person name="Peterson S.N."/>
            <person name="Caffrey M."/>
            <person name="Anderson W.F."/>
            <person name="Lavie A."/>
        </authorList>
    </citation>
    <scope>X-RAY CRYSTALLOGRAPHY (1.03 ANGSTROMS) OF WILD-TYPE AND MUTANT ALA-236</scope>
    <scope>FUNCTION</scope>
    <scope>CATALYTIC ACTIVITY</scope>
    <scope>BIOPHYSICOCHEMICAL PROPERTIES</scope>
    <scope>ACTIVE SITE</scope>
    <scope>SUBUNIT</scope>
    <scope>MUTAGENESIS OF SER-232 AND GLN-236</scope>
    <scope>REACTION MECHANISM</scope>
</reference>
<reference key="6">
    <citation type="journal article" date="2011" name="J. Biol. Chem.">
        <title>Insights into the mechanism of type I dehydroquinate dehydratases from structures of reaction intermediates.</title>
        <authorList>
            <person name="Light S.H."/>
            <person name="Minasov G."/>
            <person name="Shuvalova L."/>
            <person name="Duban M.E."/>
            <person name="Caffrey M."/>
            <person name="Anderson W.F."/>
            <person name="Lavie A."/>
        </authorList>
    </citation>
    <scope>X-RAY CRYSTALLOGRAPHY (1.60 ANGSTROMS) OF WILD-TYPE AND MUTANT MET-170 IN COMPLEX WITH 3-DEHYDROQUINIC ACID</scope>
    <scope>FUNCTION</scope>
    <scope>CATALYTIC ACTIVITY</scope>
    <scope>BIOPHYSICOCHEMICAL PROPERTIES</scope>
    <scope>ACTIVE SITE</scope>
    <scope>SUBUNIT</scope>
    <scope>MUTAGENESIS OF LYS-170</scope>
    <scope>REACTION MECHANISM</scope>
    <source>
        <strain>LT2 / SGSC1412 / ATCC 700720</strain>
    </source>
</reference>
<reference key="7">
    <citation type="submission" date="2011-05" db="PDB data bank">
        <title>Crystal structure of the 3-dehydroquinate dehydratase (aroD) from Salmonella enterica typhimurium LT2 with malonate and boric acid at the active site.</title>
        <authorList>
            <person name="Light S.H."/>
            <person name="Minasov G."/>
            <person name="Duban M.-E."/>
            <person name="Halavaty A.S."/>
            <person name="Krishna S.N."/>
            <person name="Shuvalova L."/>
            <person name="Kwon K."/>
            <person name="Anderson W.F."/>
        </authorList>
    </citation>
    <scope>X-RAY CRYSTALLOGRAPHY (1.45 ANGSTROMS) IN COMPLEX WITH SUBSTRATE ANALOGS</scope>
    <scope>SUBUNIT</scope>
</reference>
<reference key="8">
    <citation type="submission" date="2012-08" db="PDB data bank">
        <title>1.8 angstrom crystal structure of the 3-dehydroquinate dehydratase (aroD) from Salmonella typhimurium LT2 with nickel bound at active site.</title>
        <authorList>
            <person name="Light S.H."/>
            <person name="Minasov G."/>
            <person name="Krishna S.N."/>
            <person name="Shuvalova L."/>
            <person name="Kwon K."/>
            <person name="Lavie A."/>
            <person name="Anderson W.F."/>
        </authorList>
    </citation>
    <scope>X-RAY CRYSTALLOGRAPHY (1.80 ANGSTROMS) IN COMPLEX WITH SUBSTRATE ANALOG</scope>
    <scope>SUBUNIT</scope>
</reference>
<reference key="9">
    <citation type="journal article" date="2013" name="Protein Sci.">
        <title>Reassessing the type I dehydroquinate dehydratase catalytic triad: kinetic and structural studies of Glu86 mutants.</title>
        <authorList>
            <person name="Light S.H."/>
            <person name="Anderson W.F."/>
            <person name="Lavie A."/>
        </authorList>
    </citation>
    <scope>X-RAY CRYSTALLOGRAPHY (1.50 ANGSTROMS) OF MUTANT ALA-86 IN COMPLEX WITH SUBSTRATE ANALOGS</scope>
    <scope>FUNCTION</scope>
    <scope>CATALYTIC ACTIVITY</scope>
    <scope>BIOPHYSICOCHEMICAL PROPERTIES</scope>
    <scope>MUTAGENESIS OF GLU-86</scope>
    <scope>ACTIVE SITE</scope>
    <scope>SUBUNIT</scope>
    <scope>REACTION MECHANISM</scope>
</reference>
<reference key="10">
    <citation type="journal article" date="2014" name="Biochemistry">
        <title>Crystal structures of type I dehydroquinate dehydratase in complex with quinate and shikimate suggest a novel mechanism of Schiff base formation.</title>
        <authorList>
            <person name="Light S.H."/>
            <person name="Antanasijevic A."/>
            <person name="Krishna S.N."/>
            <person name="Caffrey M."/>
            <person name="Anderson W.F."/>
            <person name="Lavie A."/>
        </authorList>
    </citation>
    <scope>X-RAY CRYSTALLOGRAPHY (1.50 ANGSTROMS) WILD-TYPE AND MUTANT MET-170 IN COMPLEX WITH SUBSTRATE ANALOGS</scope>
    <scope>MUTAGENESIS OF LYS-170</scope>
    <scope>SUBUNIT</scope>
</reference>
<comment type="function">
    <text evidence="1 2 3 4 6">Involved in the third step of the chorismate pathway, which leads to the biosynthesis of aromatic amino acids. Catalyzes the cis-dehydration of 3-dehydroquinate (DHQ) and introduces the first double bond of the aromatic ring to yield 3-dehydroshikimate. The reaction involves the formation of an imine intermediate between the keto group of 3-dehydroquinate and the epsilon-amino group of a Lys-170 at the active site.</text>
</comment>
<comment type="catalytic activity">
    <reaction evidence="1 2 3 4 6">
        <text>3-dehydroquinate = 3-dehydroshikimate + H2O</text>
        <dbReference type="Rhea" id="RHEA:21096"/>
        <dbReference type="ChEBI" id="CHEBI:15377"/>
        <dbReference type="ChEBI" id="CHEBI:16630"/>
        <dbReference type="ChEBI" id="CHEBI:32364"/>
        <dbReference type="EC" id="4.2.1.10"/>
    </reaction>
</comment>
<comment type="activity regulation">
    <text evidence="6">Inhibited by (2R)-2-methyl-3-dehydroquinic acid.</text>
</comment>
<comment type="biophysicochemical properties">
    <kinetics>
        <KM evidence="6">18 uM for 3-dehydroquinate (at pH 7.2 and 25 degrees Celsius)</KM>
        <KM evidence="2">21 uM for 3-dehydroquinate (at pH 7.5 and 37 degrees Celsius)</KM>
        <KM evidence="4">53 uM for 3-dehydroquinate (at pH 7.5 and 37 degrees Celsius)</KM>
        <text evidence="2 3 4 6">kcat is 210 sec(-1) for dehydratase activity with 3-dehydroquinate (at pH 7.5 and 37 degrees Celsius). kcat is 255 sec(-1) for dehydratase activity with 3-dehydroquinate (at pH 7.2 and 25 degrees Celsius). kcat is 310 sec(-1) for dehydratase activity with 3-dehydroquinate (at pH 7.5 and 37 degrees Celsius).</text>
    </kinetics>
</comment>
<comment type="pathway">
    <text evidence="1">Metabolic intermediate biosynthesis; chorismate biosynthesis; chorismate from D-erythrose 4-phosphate and phosphoenolpyruvate: step 3/7.</text>
</comment>
<comment type="subunit">
    <text evidence="1 2 3 4 5 7 8 9">Homodimer.</text>
</comment>
<comment type="similarity">
    <text evidence="1">Belongs to the type-I 3-dehydroquinase family.</text>
</comment>
<protein>
    <recommendedName>
        <fullName evidence="1">3-dehydroquinate dehydratase</fullName>
        <shortName evidence="1">3-dehydroquinase</shortName>
        <shortName evidence="10">DHQD</shortName>
        <ecNumber evidence="1 2 3 4 6">4.2.1.10</ecNumber>
    </recommendedName>
    <alternativeName>
        <fullName evidence="1">Type I DHQase</fullName>
    </alternativeName>
    <alternativeName>
        <fullName evidence="1">Type I dehydroquinase</fullName>
        <shortName evidence="1">DHQ1</shortName>
    </alternativeName>
</protein>
<keyword id="KW-0002">3D-structure</keyword>
<keyword id="KW-0028">Amino-acid biosynthesis</keyword>
<keyword id="KW-0057">Aromatic amino acid biosynthesis</keyword>
<keyword id="KW-0456">Lyase</keyword>
<keyword id="KW-1185">Reference proteome</keyword>
<keyword id="KW-0704">Schiff base</keyword>
<accession>P58687</accession>
<proteinExistence type="evidence at protein level"/>
<feature type="chain" id="PRO_0000138806" description="3-dehydroquinate dehydratase">
    <location>
        <begin position="1"/>
        <end position="252"/>
    </location>
</feature>
<feature type="active site" description="Proton donor/acceptor" evidence="1 2 4 5 7 9">
    <location>
        <position position="143"/>
    </location>
</feature>
<feature type="active site" description="Schiff-base intermediate with substrate" evidence="1 2 4 7 8 9">
    <location>
        <position position="170"/>
    </location>
</feature>
<feature type="binding site" evidence="1 2 5 7 8">
    <location>
        <position position="21"/>
    </location>
    <ligand>
        <name>3-dehydroquinate</name>
        <dbReference type="ChEBI" id="CHEBI:32364"/>
    </ligand>
</feature>
<feature type="binding site" evidence="1 2 4 5 7 8">
    <location>
        <begin position="46"/>
        <end position="48"/>
    </location>
    <ligand>
        <name>3-dehydroquinate</name>
        <dbReference type="ChEBI" id="CHEBI:32364"/>
    </ligand>
</feature>
<feature type="binding site" evidence="1 2 4 5 7 8 9">
    <location>
        <position position="82"/>
    </location>
    <ligand>
        <name>3-dehydroquinate</name>
        <dbReference type="ChEBI" id="CHEBI:32364"/>
    </ligand>
</feature>
<feature type="binding site" evidence="1 2 4 5 7 8">
    <location>
        <position position="213"/>
    </location>
    <ligand>
        <name>3-dehydroquinate</name>
        <dbReference type="ChEBI" id="CHEBI:32364"/>
    </ligand>
</feature>
<feature type="binding site" evidence="1 2 5 7">
    <location>
        <position position="232"/>
    </location>
    <ligand>
        <name>3-dehydroquinate</name>
        <dbReference type="ChEBI" id="CHEBI:32364"/>
    </ligand>
</feature>
<feature type="binding site" evidence="1 2 4 5 7 8">
    <location>
        <position position="236"/>
    </location>
    <ligand>
        <name>3-dehydroquinate</name>
        <dbReference type="ChEBI" id="CHEBI:32364"/>
    </ligand>
</feature>
<feature type="mutagenesis site" description="Very strong reduction of the catalytic efficiency and almost the same affinity for 3-dehydroquinate." evidence="4">
    <original>E</original>
    <variation>A</variation>
    <location>
        <position position="86"/>
    </location>
</feature>
<feature type="mutagenesis site" description="Strong reduction of the catalytic efficiency and slight increase of the affinity for 3-dehydroquinate." evidence="4">
    <original>E</original>
    <variation>Q</variation>
    <location>
        <position position="86"/>
    </location>
</feature>
<feature type="mutagenesis site" description="Abolishes enzyme activity and 1.5-fold reduction of the affinity for 3-dehydroquinate." evidence="2 5">
    <original>K</original>
    <variation>M</variation>
    <location>
        <position position="170"/>
    </location>
</feature>
<feature type="mutagenesis site" description="Reduces enzyme activity 50-fold." evidence="3">
    <original>S</original>
    <variation>A</variation>
    <location>
        <position position="232"/>
    </location>
</feature>
<feature type="mutagenesis site" description="Nearly abolishes enzyme activity." evidence="3">
    <original>Q</original>
    <variation>A</variation>
    <location>
        <position position="236"/>
    </location>
</feature>
<feature type="strand" evidence="11">
    <location>
        <begin position="4"/>
        <end position="6"/>
    </location>
</feature>
<feature type="strand" evidence="11">
    <location>
        <begin position="9"/>
        <end position="11"/>
    </location>
</feature>
<feature type="strand" evidence="11">
    <location>
        <begin position="13"/>
        <end position="15"/>
    </location>
</feature>
<feature type="strand" evidence="11">
    <location>
        <begin position="17"/>
        <end position="22"/>
    </location>
</feature>
<feature type="helix" evidence="11">
    <location>
        <begin position="27"/>
        <end position="37"/>
    </location>
</feature>
<feature type="strand" evidence="11">
    <location>
        <begin position="43"/>
        <end position="48"/>
    </location>
</feature>
<feature type="helix" evidence="11">
    <location>
        <begin position="49"/>
        <end position="51"/>
    </location>
</feature>
<feature type="turn" evidence="11">
    <location>
        <begin position="53"/>
        <end position="56"/>
    </location>
</feature>
<feature type="helix" evidence="11">
    <location>
        <begin position="58"/>
        <end position="71"/>
    </location>
</feature>
<feature type="strand" evidence="11">
    <location>
        <begin position="77"/>
        <end position="80"/>
    </location>
</feature>
<feature type="helix" evidence="11">
    <location>
        <begin position="84"/>
        <end position="86"/>
    </location>
</feature>
<feature type="helix" evidence="11">
    <location>
        <begin position="94"/>
        <end position="107"/>
    </location>
</feature>
<feature type="strand" evidence="11">
    <location>
        <begin position="111"/>
        <end position="116"/>
    </location>
</feature>
<feature type="helix" evidence="11">
    <location>
        <begin position="117"/>
        <end position="119"/>
    </location>
</feature>
<feature type="helix" evidence="11">
    <location>
        <begin position="121"/>
        <end position="133"/>
    </location>
</feature>
<feature type="strand" evidence="11">
    <location>
        <begin position="137"/>
        <end position="146"/>
    </location>
</feature>
<feature type="helix" evidence="11">
    <location>
        <begin position="151"/>
        <end position="163"/>
    </location>
</feature>
<feature type="strand" evidence="11">
    <location>
        <begin position="167"/>
        <end position="173"/>
    </location>
</feature>
<feature type="helix" evidence="11">
    <location>
        <begin position="178"/>
        <end position="194"/>
    </location>
</feature>
<feature type="strand" evidence="11">
    <location>
        <begin position="201"/>
        <end position="204"/>
    </location>
</feature>
<feature type="helix" evidence="11">
    <location>
        <begin position="207"/>
        <end position="210"/>
    </location>
</feature>
<feature type="helix" evidence="11">
    <location>
        <begin position="211"/>
        <end position="214"/>
    </location>
</feature>
<feature type="helix" evidence="11">
    <location>
        <begin position="216"/>
        <end position="219"/>
    </location>
</feature>
<feature type="strand" evidence="11">
    <location>
        <begin position="223"/>
        <end position="225"/>
    </location>
</feature>
<feature type="strand" evidence="11">
    <location>
        <begin position="227"/>
        <end position="229"/>
    </location>
</feature>
<feature type="helix" evidence="11">
    <location>
        <begin position="239"/>
        <end position="251"/>
    </location>
</feature>
<name>AROD_SALTY</name>